<name>ZEN_DROSU</name>
<reference key="1">
    <citation type="journal article" date="1995" name="Chromosoma">
        <title>Molecular characterization of the zerknullt region of the Antennapedia complex of D. subobscura.</title>
        <authorList>
            <person name="Terol J."/>
            <person name="Perez-Alonso M."/>
            <person name="de Frutos R."/>
        </authorList>
    </citation>
    <scope>NUCLEOTIDE SEQUENCE [GENOMIC DNA]</scope>
    <source>
        <strain>H271</strain>
    </source>
</reference>
<comment type="function">
    <text evidence="1">Required for the differentiation of the dorsal-ventral pattern, and does not appear to be involved in the process of segmentation.</text>
</comment>
<comment type="subcellular location">
    <subcellularLocation>
        <location evidence="2">Nucleus</location>
    </subcellularLocation>
</comment>
<keyword id="KW-0217">Developmental protein</keyword>
<keyword id="KW-0238">DNA-binding</keyword>
<keyword id="KW-0371">Homeobox</keyword>
<keyword id="KW-0539">Nucleus</keyword>
<keyword id="KW-0804">Transcription</keyword>
<keyword id="KW-0805">Transcription regulation</keyword>
<organism>
    <name type="scientific">Drosophila subobscura</name>
    <name type="common">Fruit fly</name>
    <dbReference type="NCBI Taxonomy" id="7241"/>
    <lineage>
        <taxon>Eukaryota</taxon>
        <taxon>Metazoa</taxon>
        <taxon>Ecdysozoa</taxon>
        <taxon>Arthropoda</taxon>
        <taxon>Hexapoda</taxon>
        <taxon>Insecta</taxon>
        <taxon>Pterygota</taxon>
        <taxon>Neoptera</taxon>
        <taxon>Endopterygota</taxon>
        <taxon>Diptera</taxon>
        <taxon>Brachycera</taxon>
        <taxon>Muscomorpha</taxon>
        <taxon>Ephydroidea</taxon>
        <taxon>Drosophilidae</taxon>
        <taxon>Drosophila</taxon>
        <taxon>Sophophora</taxon>
    </lineage>
</organism>
<sequence length="373" mass="40604">MSSVMHYYPVHHPTAPPVVKYSDLLYGHHHSANLQPTSLQNYTQHSVSSIPEHPSLQQHHHQHHQQQQLSSDENLPSQPSQDMQRVKLKRSRTAFTSVQLVELENEFKSNMYLYRTRRIEIAQRLSLCERQVKIWFQNRRMKFKKDIQGHREAKASAKLAQPQAEQSAHRGIVQRLMSYSQDPREAAASAAEKRPAVAAAPAAPVVAAPPVVAAATSTASFYGQAKIKPQAIPSNNNNSMCSSDLSEILEHLAQSTAXPAATVTPPGPSIGPTCGSTGVSSSGHYSYNVDLVLQSIKQDLEAAAQAWSKSKAGPVLANAQSWHPSGVGSSSVPAVSHATPSMNLSWGEPAAKSRKLSISHINPCVAGGYNYQN</sequence>
<feature type="chain" id="PRO_0000049114" description="Protein zerknuellt">
    <location>
        <begin position="1"/>
        <end position="373"/>
    </location>
</feature>
<feature type="DNA-binding region" description="Homeobox" evidence="2">
    <location>
        <begin position="88"/>
        <end position="147"/>
    </location>
</feature>
<feature type="region of interest" description="Disordered" evidence="3">
    <location>
        <begin position="41"/>
        <end position="89"/>
    </location>
</feature>
<feature type="compositionally biased region" description="Polar residues" evidence="3">
    <location>
        <begin position="69"/>
        <end position="83"/>
    </location>
</feature>
<dbReference type="EMBL" id="X78058">
    <property type="protein sequence ID" value="CAA54976.1"/>
    <property type="molecule type" value="Genomic_DNA"/>
</dbReference>
<dbReference type="GO" id="GO:0005634">
    <property type="term" value="C:nucleus"/>
    <property type="evidence" value="ECO:0007669"/>
    <property type="project" value="UniProtKB-SubCell"/>
</dbReference>
<dbReference type="GO" id="GO:0000981">
    <property type="term" value="F:DNA-binding transcription factor activity, RNA polymerase II-specific"/>
    <property type="evidence" value="ECO:0007669"/>
    <property type="project" value="InterPro"/>
</dbReference>
<dbReference type="GO" id="GO:0000978">
    <property type="term" value="F:RNA polymerase II cis-regulatory region sequence-specific DNA binding"/>
    <property type="evidence" value="ECO:0007669"/>
    <property type="project" value="TreeGrafter"/>
</dbReference>
<dbReference type="GO" id="GO:0045944">
    <property type="term" value="P:positive regulation of transcription by RNA polymerase II"/>
    <property type="evidence" value="ECO:0007669"/>
    <property type="project" value="UniProtKB-ARBA"/>
</dbReference>
<dbReference type="CDD" id="cd00086">
    <property type="entry name" value="homeodomain"/>
    <property type="match status" value="1"/>
</dbReference>
<dbReference type="FunFam" id="1.10.10.60:FF:000709">
    <property type="entry name" value="GG10235"/>
    <property type="match status" value="1"/>
</dbReference>
<dbReference type="Gene3D" id="1.10.10.60">
    <property type="entry name" value="Homeodomain-like"/>
    <property type="match status" value="1"/>
</dbReference>
<dbReference type="InterPro" id="IPR001356">
    <property type="entry name" value="HD"/>
</dbReference>
<dbReference type="InterPro" id="IPR020479">
    <property type="entry name" value="HD_metazoa"/>
</dbReference>
<dbReference type="InterPro" id="IPR017970">
    <property type="entry name" value="Homeobox_CS"/>
</dbReference>
<dbReference type="InterPro" id="IPR009057">
    <property type="entry name" value="Homeodomain-like_sf"/>
</dbReference>
<dbReference type="PANTHER" id="PTHR45664:SF12">
    <property type="entry name" value="PANCREAS_DUODENUM HOMEOBOX PROTEIN 1"/>
    <property type="match status" value="1"/>
</dbReference>
<dbReference type="PANTHER" id="PTHR45664">
    <property type="entry name" value="PROTEIN ZERKNUELLT 1-RELATED"/>
    <property type="match status" value="1"/>
</dbReference>
<dbReference type="Pfam" id="PF00046">
    <property type="entry name" value="Homeodomain"/>
    <property type="match status" value="1"/>
</dbReference>
<dbReference type="PRINTS" id="PR00024">
    <property type="entry name" value="HOMEOBOX"/>
</dbReference>
<dbReference type="SMART" id="SM00389">
    <property type="entry name" value="HOX"/>
    <property type="match status" value="1"/>
</dbReference>
<dbReference type="SUPFAM" id="SSF46689">
    <property type="entry name" value="Homeodomain-like"/>
    <property type="match status" value="1"/>
</dbReference>
<dbReference type="PROSITE" id="PS00027">
    <property type="entry name" value="HOMEOBOX_1"/>
    <property type="match status" value="1"/>
</dbReference>
<dbReference type="PROSITE" id="PS50071">
    <property type="entry name" value="HOMEOBOX_2"/>
    <property type="match status" value="1"/>
</dbReference>
<accession>Q24648</accession>
<protein>
    <recommendedName>
        <fullName>Protein zerknuellt</fullName>
    </recommendedName>
</protein>
<evidence type="ECO:0000250" key="1"/>
<evidence type="ECO:0000255" key="2">
    <source>
        <dbReference type="PROSITE-ProRule" id="PRU00108"/>
    </source>
</evidence>
<evidence type="ECO:0000256" key="3">
    <source>
        <dbReference type="SAM" id="MobiDB-lite"/>
    </source>
</evidence>
<proteinExistence type="inferred from homology"/>
<gene>
    <name type="primary">zen</name>
</gene>